<sequence length="293" mass="32200">MVWRTLGASNFSTCPNGSVQWIWDVFGECAQDGWDEASVGLGLVSILCFAASTFPQYIKACKTGNMDQALSLWFLLGWIGGDSCNLIGSFLADQLPLQTYTAVYYVLADLMMLTLYFHYKFKKRPSPLSAPINSVLLFILGTVCITPLLSSTDPVAVPREGFRGRTLLSVEPGNKPFTKKEVIGFVIGSASSLLYLLSRLPQIRTNFIRQSTQGISYSLFALVMLGNTLYGLSVLLKNPEVGQSEGSYLLHHLPWLVGSLGVLLLDTIISIQFLVYRSHETAAASEREPLLPS</sequence>
<organism>
    <name type="scientific">Mus musculus</name>
    <name type="common">Mouse</name>
    <dbReference type="NCBI Taxonomy" id="10090"/>
    <lineage>
        <taxon>Eukaryota</taxon>
        <taxon>Metazoa</taxon>
        <taxon>Chordata</taxon>
        <taxon>Craniata</taxon>
        <taxon>Vertebrata</taxon>
        <taxon>Euteleostomi</taxon>
        <taxon>Mammalia</taxon>
        <taxon>Eutheria</taxon>
        <taxon>Euarchontoglires</taxon>
        <taxon>Glires</taxon>
        <taxon>Rodentia</taxon>
        <taxon>Myomorpha</taxon>
        <taxon>Muroidea</taxon>
        <taxon>Muridae</taxon>
        <taxon>Murinae</taxon>
        <taxon>Mus</taxon>
        <taxon>Mus</taxon>
    </lineage>
</organism>
<dbReference type="EMBL" id="AK081661">
    <property type="protein sequence ID" value="BAC38282.1"/>
    <property type="molecule type" value="mRNA"/>
</dbReference>
<dbReference type="EMBL" id="AK156668">
    <property type="protein sequence ID" value="BAE33801.1"/>
    <property type="molecule type" value="mRNA"/>
</dbReference>
<dbReference type="EMBL" id="AL807811">
    <property type="status" value="NOT_ANNOTATED_CDS"/>
    <property type="molecule type" value="Genomic_DNA"/>
</dbReference>
<dbReference type="EMBL" id="BC025609">
    <property type="protein sequence ID" value="AAH25609.1"/>
    <property type="molecule type" value="mRNA"/>
</dbReference>
<dbReference type="CCDS" id="CCDS18843.2">
    <molecule id="Q8C4N4-1"/>
</dbReference>
<dbReference type="RefSeq" id="NP_663359.2">
    <molecule id="Q8C4N4-1"/>
    <property type="nucleotide sequence ID" value="NM_145384.4"/>
</dbReference>
<dbReference type="RefSeq" id="XP_011248522.1">
    <property type="nucleotide sequence ID" value="XM_011250220.2"/>
</dbReference>
<dbReference type="RefSeq" id="XP_011248523.1">
    <property type="nucleotide sequence ID" value="XM_011250221.2"/>
</dbReference>
<dbReference type="RefSeq" id="XP_011248524.1">
    <property type="nucleotide sequence ID" value="XM_011250222.2"/>
</dbReference>
<dbReference type="RefSeq" id="XP_017175584.1">
    <property type="nucleotide sequence ID" value="XM_017320095.1"/>
</dbReference>
<dbReference type="FunCoup" id="Q8C4N4">
    <property type="interactions" value="753"/>
</dbReference>
<dbReference type="STRING" id="10090.ENSMUSP00000059772"/>
<dbReference type="GlyCosmos" id="Q8C4N4">
    <property type="glycosylation" value="2 sites, No reported glycans"/>
</dbReference>
<dbReference type="GlyGen" id="Q8C4N4">
    <property type="glycosylation" value="2 sites"/>
</dbReference>
<dbReference type="iPTMnet" id="Q8C4N4"/>
<dbReference type="PhosphoSitePlus" id="Q8C4N4"/>
<dbReference type="PaxDb" id="10090-ENSMUSP00000059772"/>
<dbReference type="ProteomicsDB" id="264903">
    <molecule id="Q8C4N4-1"/>
</dbReference>
<dbReference type="ProteomicsDB" id="264904">
    <molecule id="Q8C4N4-2"/>
</dbReference>
<dbReference type="Antibodypedia" id="46685">
    <property type="antibodies" value="87 antibodies from 16 providers"/>
</dbReference>
<dbReference type="DNASU" id="212555"/>
<dbReference type="Ensembl" id="ENSMUST00000053862.12">
    <molecule id="Q8C4N4-1"/>
    <property type="protein sequence ID" value="ENSMUSP00000059772.6"/>
    <property type="gene ID" value="ENSMUSG00000028744.16"/>
</dbReference>
<dbReference type="Ensembl" id="ENSMUST00000139840.9">
    <molecule id="Q8C4N4-1"/>
    <property type="protein sequence ID" value="ENSMUSP00000121362.3"/>
    <property type="gene ID" value="ENSMUSG00000028744.16"/>
</dbReference>
<dbReference type="Ensembl" id="ENSMUST00000172747.8">
    <molecule id="Q8C4N4-1"/>
    <property type="protein sequence ID" value="ENSMUSP00000134464.2"/>
    <property type="gene ID" value="ENSMUSG00000028744.16"/>
</dbReference>
<dbReference type="GeneID" id="212555"/>
<dbReference type="KEGG" id="mmu:212555"/>
<dbReference type="UCSC" id="uc008vma.2">
    <molecule id="Q8C4N4-1"/>
    <property type="organism name" value="mouse"/>
</dbReference>
<dbReference type="AGR" id="MGI:2384837"/>
<dbReference type="CTD" id="54896"/>
<dbReference type="MGI" id="MGI:2384837">
    <property type="gene designation" value="Slc66a1"/>
</dbReference>
<dbReference type="VEuPathDB" id="HostDB:ENSMUSG00000028744"/>
<dbReference type="eggNOG" id="KOG2913">
    <property type="taxonomic scope" value="Eukaryota"/>
</dbReference>
<dbReference type="GeneTree" id="ENSGT00390000003344"/>
<dbReference type="HOGENOM" id="CLU_019699_3_0_1"/>
<dbReference type="InParanoid" id="Q8C4N4"/>
<dbReference type="OMA" id="DMCIFIQ"/>
<dbReference type="OrthoDB" id="8048523at2759"/>
<dbReference type="PhylomeDB" id="Q8C4N4"/>
<dbReference type="TreeFam" id="TF313694"/>
<dbReference type="Reactome" id="R-MMU-5223345">
    <property type="pathway name" value="Miscellaneous transport and binding events"/>
</dbReference>
<dbReference type="BioGRID-ORCS" id="212555">
    <property type="hits" value="5 hits in 77 CRISPR screens"/>
</dbReference>
<dbReference type="ChiTaRS" id="Pqlc2">
    <property type="organism name" value="mouse"/>
</dbReference>
<dbReference type="PRO" id="PR:Q8C4N4"/>
<dbReference type="Proteomes" id="UP000000589">
    <property type="component" value="Chromosome 4"/>
</dbReference>
<dbReference type="RNAct" id="Q8C4N4">
    <property type="molecule type" value="protein"/>
</dbReference>
<dbReference type="Bgee" id="ENSMUSG00000028744">
    <property type="expression patterns" value="Expressed in yolk sac and 189 other cell types or tissues"/>
</dbReference>
<dbReference type="ExpressionAtlas" id="Q8C4N4">
    <property type="expression patterns" value="baseline and differential"/>
</dbReference>
<dbReference type="GO" id="GO:0005765">
    <property type="term" value="C:lysosomal membrane"/>
    <property type="evidence" value="ECO:0000250"/>
    <property type="project" value="UniProtKB"/>
</dbReference>
<dbReference type="GO" id="GO:0031090">
    <property type="term" value="C:organelle membrane"/>
    <property type="evidence" value="ECO:0000250"/>
    <property type="project" value="UniProtKB"/>
</dbReference>
<dbReference type="GO" id="GO:0015174">
    <property type="term" value="F:basic amino acid transmembrane transporter activity"/>
    <property type="evidence" value="ECO:0000250"/>
    <property type="project" value="UniProtKB"/>
</dbReference>
<dbReference type="GO" id="GO:0061459">
    <property type="term" value="F:L-arginine transmembrane transporter activity"/>
    <property type="evidence" value="ECO:0000250"/>
    <property type="project" value="UniProtKB"/>
</dbReference>
<dbReference type="GO" id="GO:0005290">
    <property type="term" value="F:L-histidine transmembrane transporter activity"/>
    <property type="evidence" value="ECO:0007669"/>
    <property type="project" value="Ensembl"/>
</dbReference>
<dbReference type="GO" id="GO:0015189">
    <property type="term" value="F:L-lysine transmembrane transporter activity"/>
    <property type="evidence" value="ECO:0000250"/>
    <property type="project" value="UniProtKB"/>
</dbReference>
<dbReference type="GO" id="GO:0080144">
    <property type="term" value="P:intracellular amino acid homeostasis"/>
    <property type="evidence" value="ECO:0000250"/>
    <property type="project" value="UniProtKB"/>
</dbReference>
<dbReference type="GO" id="GO:1903826">
    <property type="term" value="P:L-arginine transmembrane transport"/>
    <property type="evidence" value="ECO:0000250"/>
    <property type="project" value="UniProtKB"/>
</dbReference>
<dbReference type="GO" id="GO:0015819">
    <property type="term" value="P:lysine transport"/>
    <property type="evidence" value="ECO:0000250"/>
    <property type="project" value="UniProtKB"/>
</dbReference>
<dbReference type="FunFam" id="1.20.1280.290:FF:000013">
    <property type="entry name" value="lysosomal amino acid transporter 1 homolog"/>
    <property type="match status" value="1"/>
</dbReference>
<dbReference type="FunFam" id="1.20.1280.290:FF:000017">
    <property type="entry name" value="lysosomal amino acid transporter 1 homolog"/>
    <property type="match status" value="1"/>
</dbReference>
<dbReference type="Gene3D" id="1.20.1280.290">
    <property type="match status" value="2"/>
</dbReference>
<dbReference type="InterPro" id="IPR051415">
    <property type="entry name" value="LAAT-1"/>
</dbReference>
<dbReference type="InterPro" id="IPR006603">
    <property type="entry name" value="PQ-loop_rpt"/>
</dbReference>
<dbReference type="PANTHER" id="PTHR16201:SF36">
    <property type="entry name" value="LYSOSOMAL AMINO ACID TRANSPORTER 1 HOMOLOG"/>
    <property type="match status" value="1"/>
</dbReference>
<dbReference type="PANTHER" id="PTHR16201">
    <property type="entry name" value="SEVEN TRANSMEMBRANE PROTEIN 1-RELATED"/>
    <property type="match status" value="1"/>
</dbReference>
<dbReference type="Pfam" id="PF04193">
    <property type="entry name" value="PQ-loop"/>
    <property type="match status" value="2"/>
</dbReference>
<dbReference type="SMART" id="SM00679">
    <property type="entry name" value="CTNS"/>
    <property type="match status" value="2"/>
</dbReference>
<keyword id="KW-0025">Alternative splicing</keyword>
<keyword id="KW-0029">Amino-acid transport</keyword>
<keyword id="KW-0325">Glycoprotein</keyword>
<keyword id="KW-0458">Lysosome</keyword>
<keyword id="KW-0472">Membrane</keyword>
<keyword id="KW-1185">Reference proteome</keyword>
<keyword id="KW-0677">Repeat</keyword>
<keyword id="KW-0812">Transmembrane</keyword>
<keyword id="KW-1133">Transmembrane helix</keyword>
<keyword id="KW-0813">Transport</keyword>
<name>LAAT1_MOUSE</name>
<gene>
    <name evidence="7" type="primary">Slc66a1</name>
    <name evidence="5" type="synonym">Pqlc2</name>
</gene>
<protein>
    <recommendedName>
        <fullName evidence="6">Lysosomal amino acid transporter 1 homolog</fullName>
    </recommendedName>
    <alternativeName>
        <fullName>PQ-loop repeat-containing protein 2</fullName>
    </alternativeName>
    <alternativeName>
        <fullName evidence="6">Solute carrier family 66 member 1</fullName>
    </alternativeName>
</protein>
<evidence type="ECO:0000250" key="1"/>
<evidence type="ECO:0000255" key="2"/>
<evidence type="ECO:0000269" key="3">
    <source>
    </source>
</evidence>
<evidence type="ECO:0000303" key="4">
    <source>
    </source>
</evidence>
<evidence type="ECO:0000303" key="5">
    <source>
    </source>
</evidence>
<evidence type="ECO:0000305" key="6"/>
<evidence type="ECO:0000312" key="7">
    <source>
        <dbReference type="MGI" id="MGI:2384837"/>
    </source>
</evidence>
<feature type="chain" id="PRO_0000282435" description="Lysosomal amino acid transporter 1 homolog">
    <location>
        <begin position="1"/>
        <end position="293"/>
    </location>
</feature>
<feature type="topological domain" description="Lumenal" evidence="2">
    <location>
        <begin position="1"/>
        <end position="37"/>
    </location>
</feature>
<feature type="transmembrane region" description="Helical" evidence="2">
    <location>
        <begin position="38"/>
        <end position="58"/>
    </location>
</feature>
<feature type="topological domain" description="Cytoplasmic" evidence="2">
    <location>
        <begin position="59"/>
        <end position="71"/>
    </location>
</feature>
<feature type="transmembrane region" description="Helical" evidence="2">
    <location>
        <begin position="72"/>
        <end position="92"/>
    </location>
</feature>
<feature type="topological domain" description="Lumenal" evidence="2">
    <location>
        <begin position="93"/>
        <end position="96"/>
    </location>
</feature>
<feature type="transmembrane region" description="Helical" evidence="2">
    <location>
        <begin position="97"/>
        <end position="117"/>
    </location>
</feature>
<feature type="topological domain" description="Cytoplasmic" evidence="2">
    <location>
        <begin position="118"/>
        <end position="127"/>
    </location>
</feature>
<feature type="transmembrane region" description="Helical" evidence="2">
    <location>
        <begin position="128"/>
        <end position="148"/>
    </location>
</feature>
<feature type="topological domain" description="Lumenal" evidence="2">
    <location>
        <begin position="149"/>
        <end position="182"/>
    </location>
</feature>
<feature type="transmembrane region" description="Helical" evidence="2">
    <location>
        <begin position="183"/>
        <end position="203"/>
    </location>
</feature>
<feature type="topological domain" description="Cytoplasmic" evidence="2">
    <location>
        <begin position="204"/>
        <end position="214"/>
    </location>
</feature>
<feature type="transmembrane region" description="Helical" evidence="2">
    <location>
        <begin position="215"/>
        <end position="235"/>
    </location>
</feature>
<feature type="topological domain" description="Lumenal" evidence="2">
    <location>
        <begin position="236"/>
        <end position="254"/>
    </location>
</feature>
<feature type="transmembrane region" description="Helical" evidence="2">
    <location>
        <begin position="255"/>
        <end position="275"/>
    </location>
</feature>
<feature type="topological domain" description="Cytoplasmic" evidence="2">
    <location>
        <begin position="276"/>
        <end position="293"/>
    </location>
</feature>
<feature type="domain" description="PQ-loop 1">
    <location>
        <begin position="34"/>
        <end position="100"/>
    </location>
</feature>
<feature type="domain" description="PQ-loop 2">
    <location>
        <begin position="191"/>
        <end position="243"/>
    </location>
</feature>
<feature type="short sequence motif" description="Di-leucine motif">
    <location>
        <begin position="290"/>
        <end position="291"/>
    </location>
</feature>
<feature type="glycosylation site" description="N-linked (GlcNAc...) asparagine" evidence="2">
    <location>
        <position position="10"/>
    </location>
</feature>
<feature type="glycosylation site" description="N-linked (GlcNAc...) asparagine" evidence="2">
    <location>
        <position position="16"/>
    </location>
</feature>
<feature type="splice variant" id="VSP_024153" description="In isoform 2." evidence="4">
    <location>
        <begin position="1"/>
        <end position="65"/>
    </location>
</feature>
<accession>Q8C4N4</accession>
<accession>Q8R132</accession>
<comment type="function">
    <text evidence="1">Amino acid transporter that specifically mediates the pH-dependent export of the cationic amino acids arginine, histidine and lysine from lysosomes.</text>
</comment>
<comment type="subcellular location">
    <subcellularLocation>
        <location evidence="1">Lysosome membrane</location>
        <topology evidence="1">Multi-pass membrane protein</topology>
    </subcellularLocation>
</comment>
<comment type="alternative products">
    <event type="alternative splicing"/>
    <isoform>
        <id>Q8C4N4-1</id>
        <name>1</name>
        <sequence type="displayed"/>
    </isoform>
    <isoform>
        <id>Q8C4N4-2</id>
        <name>2</name>
        <sequence type="described" ref="VSP_024153"/>
    </isoform>
</comment>
<comment type="tissue specificity">
    <text evidence="3">Ubiquitously expressed.</text>
</comment>
<comment type="domain">
    <text evidence="1">The di-leucine motif mediates lysosomal localization.</text>
</comment>
<comment type="similarity">
    <text evidence="6">Belongs to the laat-1 family.</text>
</comment>
<proteinExistence type="evidence at transcript level"/>
<reference key="1">
    <citation type="journal article" date="2005" name="Science">
        <title>The transcriptional landscape of the mammalian genome.</title>
        <authorList>
            <person name="Carninci P."/>
            <person name="Kasukawa T."/>
            <person name="Katayama S."/>
            <person name="Gough J."/>
            <person name="Frith M.C."/>
            <person name="Maeda N."/>
            <person name="Oyama R."/>
            <person name="Ravasi T."/>
            <person name="Lenhard B."/>
            <person name="Wells C."/>
            <person name="Kodzius R."/>
            <person name="Shimokawa K."/>
            <person name="Bajic V.B."/>
            <person name="Brenner S.E."/>
            <person name="Batalov S."/>
            <person name="Forrest A.R."/>
            <person name="Zavolan M."/>
            <person name="Davis M.J."/>
            <person name="Wilming L.G."/>
            <person name="Aidinis V."/>
            <person name="Allen J.E."/>
            <person name="Ambesi-Impiombato A."/>
            <person name="Apweiler R."/>
            <person name="Aturaliya R.N."/>
            <person name="Bailey T.L."/>
            <person name="Bansal M."/>
            <person name="Baxter L."/>
            <person name="Beisel K.W."/>
            <person name="Bersano T."/>
            <person name="Bono H."/>
            <person name="Chalk A.M."/>
            <person name="Chiu K.P."/>
            <person name="Choudhary V."/>
            <person name="Christoffels A."/>
            <person name="Clutterbuck D.R."/>
            <person name="Crowe M.L."/>
            <person name="Dalla E."/>
            <person name="Dalrymple B.P."/>
            <person name="de Bono B."/>
            <person name="Della Gatta G."/>
            <person name="di Bernardo D."/>
            <person name="Down T."/>
            <person name="Engstrom P."/>
            <person name="Fagiolini M."/>
            <person name="Faulkner G."/>
            <person name="Fletcher C.F."/>
            <person name="Fukushima T."/>
            <person name="Furuno M."/>
            <person name="Futaki S."/>
            <person name="Gariboldi M."/>
            <person name="Georgii-Hemming P."/>
            <person name="Gingeras T.R."/>
            <person name="Gojobori T."/>
            <person name="Green R.E."/>
            <person name="Gustincich S."/>
            <person name="Harbers M."/>
            <person name="Hayashi Y."/>
            <person name="Hensch T.K."/>
            <person name="Hirokawa N."/>
            <person name="Hill D."/>
            <person name="Huminiecki L."/>
            <person name="Iacono M."/>
            <person name="Ikeo K."/>
            <person name="Iwama A."/>
            <person name="Ishikawa T."/>
            <person name="Jakt M."/>
            <person name="Kanapin A."/>
            <person name="Katoh M."/>
            <person name="Kawasawa Y."/>
            <person name="Kelso J."/>
            <person name="Kitamura H."/>
            <person name="Kitano H."/>
            <person name="Kollias G."/>
            <person name="Krishnan S.P."/>
            <person name="Kruger A."/>
            <person name="Kummerfeld S.K."/>
            <person name="Kurochkin I.V."/>
            <person name="Lareau L.F."/>
            <person name="Lazarevic D."/>
            <person name="Lipovich L."/>
            <person name="Liu J."/>
            <person name="Liuni S."/>
            <person name="McWilliam S."/>
            <person name="Madan Babu M."/>
            <person name="Madera M."/>
            <person name="Marchionni L."/>
            <person name="Matsuda H."/>
            <person name="Matsuzawa S."/>
            <person name="Miki H."/>
            <person name="Mignone F."/>
            <person name="Miyake S."/>
            <person name="Morris K."/>
            <person name="Mottagui-Tabar S."/>
            <person name="Mulder N."/>
            <person name="Nakano N."/>
            <person name="Nakauchi H."/>
            <person name="Ng P."/>
            <person name="Nilsson R."/>
            <person name="Nishiguchi S."/>
            <person name="Nishikawa S."/>
            <person name="Nori F."/>
            <person name="Ohara O."/>
            <person name="Okazaki Y."/>
            <person name="Orlando V."/>
            <person name="Pang K.C."/>
            <person name="Pavan W.J."/>
            <person name="Pavesi G."/>
            <person name="Pesole G."/>
            <person name="Petrovsky N."/>
            <person name="Piazza S."/>
            <person name="Reed J."/>
            <person name="Reid J.F."/>
            <person name="Ring B.Z."/>
            <person name="Ringwald M."/>
            <person name="Rost B."/>
            <person name="Ruan Y."/>
            <person name="Salzberg S.L."/>
            <person name="Sandelin A."/>
            <person name="Schneider C."/>
            <person name="Schoenbach C."/>
            <person name="Sekiguchi K."/>
            <person name="Semple C.A."/>
            <person name="Seno S."/>
            <person name="Sessa L."/>
            <person name="Sheng Y."/>
            <person name="Shibata Y."/>
            <person name="Shimada H."/>
            <person name="Shimada K."/>
            <person name="Silva D."/>
            <person name="Sinclair B."/>
            <person name="Sperling S."/>
            <person name="Stupka E."/>
            <person name="Sugiura K."/>
            <person name="Sultana R."/>
            <person name="Takenaka Y."/>
            <person name="Taki K."/>
            <person name="Tammoja K."/>
            <person name="Tan S.L."/>
            <person name="Tang S."/>
            <person name="Taylor M.S."/>
            <person name="Tegner J."/>
            <person name="Teichmann S.A."/>
            <person name="Ueda H.R."/>
            <person name="van Nimwegen E."/>
            <person name="Verardo R."/>
            <person name="Wei C.L."/>
            <person name="Yagi K."/>
            <person name="Yamanishi H."/>
            <person name="Zabarovsky E."/>
            <person name="Zhu S."/>
            <person name="Zimmer A."/>
            <person name="Hide W."/>
            <person name="Bult C."/>
            <person name="Grimmond S.M."/>
            <person name="Teasdale R.D."/>
            <person name="Liu E.T."/>
            <person name="Brusic V."/>
            <person name="Quackenbush J."/>
            <person name="Wahlestedt C."/>
            <person name="Mattick J.S."/>
            <person name="Hume D.A."/>
            <person name="Kai C."/>
            <person name="Sasaki D."/>
            <person name="Tomaru Y."/>
            <person name="Fukuda S."/>
            <person name="Kanamori-Katayama M."/>
            <person name="Suzuki M."/>
            <person name="Aoki J."/>
            <person name="Arakawa T."/>
            <person name="Iida J."/>
            <person name="Imamura K."/>
            <person name="Itoh M."/>
            <person name="Kato T."/>
            <person name="Kawaji H."/>
            <person name="Kawagashira N."/>
            <person name="Kawashima T."/>
            <person name="Kojima M."/>
            <person name="Kondo S."/>
            <person name="Konno H."/>
            <person name="Nakano K."/>
            <person name="Ninomiya N."/>
            <person name="Nishio T."/>
            <person name="Okada M."/>
            <person name="Plessy C."/>
            <person name="Shibata K."/>
            <person name="Shiraki T."/>
            <person name="Suzuki S."/>
            <person name="Tagami M."/>
            <person name="Waki K."/>
            <person name="Watahiki A."/>
            <person name="Okamura-Oho Y."/>
            <person name="Suzuki H."/>
            <person name="Kawai J."/>
            <person name="Hayashizaki Y."/>
        </authorList>
    </citation>
    <scope>NUCLEOTIDE SEQUENCE [LARGE SCALE MRNA] (ISOFORM 1)</scope>
    <source>
        <strain>C57BL/6J</strain>
        <strain>NOD</strain>
        <tissue>Head</tissue>
        <tissue>Spleen</tissue>
    </source>
</reference>
<reference key="2">
    <citation type="journal article" date="2009" name="PLoS Biol.">
        <title>Lineage-specific biology revealed by a finished genome assembly of the mouse.</title>
        <authorList>
            <person name="Church D.M."/>
            <person name="Goodstadt L."/>
            <person name="Hillier L.W."/>
            <person name="Zody M.C."/>
            <person name="Goldstein S."/>
            <person name="She X."/>
            <person name="Bult C.J."/>
            <person name="Agarwala R."/>
            <person name="Cherry J.L."/>
            <person name="DiCuccio M."/>
            <person name="Hlavina W."/>
            <person name="Kapustin Y."/>
            <person name="Meric P."/>
            <person name="Maglott D."/>
            <person name="Birtle Z."/>
            <person name="Marques A.C."/>
            <person name="Graves T."/>
            <person name="Zhou S."/>
            <person name="Teague B."/>
            <person name="Potamousis K."/>
            <person name="Churas C."/>
            <person name="Place M."/>
            <person name="Herschleb J."/>
            <person name="Runnheim R."/>
            <person name="Forrest D."/>
            <person name="Amos-Landgraf J."/>
            <person name="Schwartz D.C."/>
            <person name="Cheng Z."/>
            <person name="Lindblad-Toh K."/>
            <person name="Eichler E.E."/>
            <person name="Ponting C.P."/>
        </authorList>
    </citation>
    <scope>NUCLEOTIDE SEQUENCE [LARGE SCALE GENOMIC DNA]</scope>
    <source>
        <strain>C57BL/6J</strain>
    </source>
</reference>
<reference key="3">
    <citation type="journal article" date="2004" name="Genome Res.">
        <title>The status, quality, and expansion of the NIH full-length cDNA project: the Mammalian Gene Collection (MGC).</title>
        <authorList>
            <consortium name="The MGC Project Team"/>
        </authorList>
    </citation>
    <scope>NUCLEOTIDE SEQUENCE [LARGE SCALE MRNA] (ISOFORM 2)</scope>
    <source>
        <strain>FVB/N</strain>
        <tissue>Liver</tissue>
    </source>
</reference>
<reference key="4">
    <citation type="journal article" date="2012" name="Proc. Natl. Acad. Sci. U.S.A.">
        <title>Heptahelical protein PQLC2 is a lysosomal cationic amino acid exporter underlying the action of cysteamine in cystinosis therapy.</title>
        <authorList>
            <person name="Jezegou A."/>
            <person name="Llinares E."/>
            <person name="Anne C."/>
            <person name="Kieffer-Jaquinod S."/>
            <person name="O'Regan S."/>
            <person name="Aupetit J."/>
            <person name="Chabli A."/>
            <person name="Sagne C."/>
            <person name="Debacker C."/>
            <person name="Chadefaux-Vekemans B."/>
            <person name="Journet A."/>
            <person name="Andre B."/>
            <person name="Gasnier B."/>
        </authorList>
    </citation>
    <scope>TISSUE SPECIFICITY</scope>
</reference>